<dbReference type="EMBL" id="D50601">
    <property type="protein sequence ID" value="BAA09146.1"/>
    <property type="molecule type" value="Genomic_DNA"/>
</dbReference>
<dbReference type="RefSeq" id="WP_010921669.1">
    <property type="nucleotide sequence ID" value="NZ_WHSK01000208.1"/>
</dbReference>
<dbReference type="SMR" id="P0A224"/>
<dbReference type="STRING" id="216599.GCA_000283715_05228"/>
<dbReference type="OMA" id="TVPNKDW"/>
<dbReference type="GO" id="GO:0009986">
    <property type="term" value="C:cell surface"/>
    <property type="evidence" value="ECO:0007669"/>
    <property type="project" value="UniProtKB-SubCell"/>
</dbReference>
<dbReference type="GO" id="GO:0005576">
    <property type="term" value="C:extracellular region"/>
    <property type="evidence" value="ECO:0007669"/>
    <property type="project" value="UniProtKB-SubCell"/>
</dbReference>
<dbReference type="GO" id="GO:0030257">
    <property type="term" value="C:type III protein secretion system complex"/>
    <property type="evidence" value="ECO:0007669"/>
    <property type="project" value="InterPro"/>
</dbReference>
<dbReference type="GO" id="GO:0030254">
    <property type="term" value="P:protein secretion by the type III secretion system"/>
    <property type="evidence" value="ECO:0007669"/>
    <property type="project" value="InterPro"/>
</dbReference>
<dbReference type="FunFam" id="1.20.58.90:FF:000006">
    <property type="entry name" value="Type III secretion system needle complex protein"/>
    <property type="match status" value="1"/>
</dbReference>
<dbReference type="Gene3D" id="1.20.58.90">
    <property type="match status" value="1"/>
</dbReference>
<dbReference type="InterPro" id="IPR021123">
    <property type="entry name" value="T3SS_needle-like"/>
</dbReference>
<dbReference type="InterPro" id="IPR037203">
    <property type="entry name" value="T3SS_needle-like_sf"/>
</dbReference>
<dbReference type="InterPro" id="IPR011841">
    <property type="entry name" value="T3SS_needle_YscF"/>
</dbReference>
<dbReference type="NCBIfam" id="TIGR02105">
    <property type="entry name" value="III_needle"/>
    <property type="match status" value="1"/>
</dbReference>
<dbReference type="NCBIfam" id="NF011854">
    <property type="entry name" value="PRK15326.1"/>
    <property type="match status" value="1"/>
</dbReference>
<dbReference type="Pfam" id="PF09392">
    <property type="entry name" value="T3SS_needle_F"/>
    <property type="match status" value="1"/>
</dbReference>
<dbReference type="SUPFAM" id="SSF140129">
    <property type="entry name" value="MxiH-like"/>
    <property type="match status" value="1"/>
</dbReference>
<geneLocation type="plasmid">
    <name>pINV</name>
</geneLocation>
<proteinExistence type="inferred from homology"/>
<evidence type="ECO:0000250" key="1">
    <source>
        <dbReference type="UniProtKB" id="P0A223"/>
    </source>
</evidence>
<evidence type="ECO:0000305" key="2"/>
<sequence>MSVTVPNDDWTLSSLSETFDDGTQTLQGELTLALDKLAKNPSNPQLLAEYQSKLSEYTLYRNAQSNTVKVIKDVDAAIIQNFR</sequence>
<accession>P0A224</accession>
<accession>Q06079</accession>
<accession>Q6LAA7</accession>
<gene>
    <name evidence="1" type="primary">sctF</name>
    <name type="synonym">mxiH</name>
</gene>
<reference key="1">
    <citation type="submission" date="1995-05" db="EMBL/GenBank/DDBJ databases">
        <title>Comparison and high conservation of nucleotide sequences of spa-mxi regions between S.sonnei and S.flexneri -- identification of a new gene coding plausible membrane protein.</title>
        <authorList>
            <person name="Arakawa E."/>
            <person name="Kato J."/>
            <person name="Ito K."/>
            <person name="Watanabe H."/>
        </authorList>
    </citation>
    <scope>NUCLEOTIDE SEQUENCE [GENOMIC DNA]</scope>
    <source>
        <strain>HW383</strain>
    </source>
</reference>
<feature type="chain" id="PRO_0000096660" description="Type 3 secretion system needle filament protein">
    <location>
        <begin position="1"/>
        <end position="83"/>
    </location>
</feature>
<organism>
    <name type="scientific">Shigella sonnei</name>
    <dbReference type="NCBI Taxonomy" id="624"/>
    <lineage>
        <taxon>Bacteria</taxon>
        <taxon>Pseudomonadati</taxon>
        <taxon>Pseudomonadota</taxon>
        <taxon>Gammaproteobacteria</taxon>
        <taxon>Enterobacterales</taxon>
        <taxon>Enterobacteriaceae</taxon>
        <taxon>Shigella</taxon>
    </lineage>
</organism>
<keyword id="KW-0614">Plasmid</keyword>
<keyword id="KW-0653">Protein transport</keyword>
<keyword id="KW-0964">Secreted</keyword>
<keyword id="KW-0813">Transport</keyword>
<keyword id="KW-0843">Virulence</keyword>
<protein>
    <recommendedName>
        <fullName evidence="2">Type 3 secretion system needle filament protein</fullName>
        <shortName evidence="2">T3SS needle filament protein</shortName>
    </recommendedName>
</protein>
<name>SCTF_SHISO</name>
<comment type="function">
    <text evidence="1">Component of the type III secretion system (T3SS), also called injectisome, which is used to inject bacterial effector proteins into eukaryotic host cells (By similarity). MxiH/SctF forms the external needle filament that protrudes from the bacterial surface (By similarity).</text>
</comment>
<comment type="subunit">
    <text evidence="1">The core secretion machinery of the T3SS is composed of approximately 20 different proteins, including cytoplasmic components, a base, an export apparatus and a needle (By similarity). This subunit polymerizes and forms the helical needle filament (By similarity).</text>
</comment>
<comment type="subcellular location">
    <subcellularLocation>
        <location evidence="2">Secreted</location>
    </subcellularLocation>
    <subcellularLocation>
        <location evidence="2">Cell surface</location>
    </subcellularLocation>
</comment>
<comment type="similarity">
    <text evidence="2">Belongs to the SctF family.</text>
</comment>